<keyword id="KW-0007">Acetylation</keyword>
<keyword id="KW-0067">ATP-binding</keyword>
<keyword id="KW-0963">Cytoplasm</keyword>
<keyword id="KW-0418">Kinase</keyword>
<keyword id="KW-0545">Nucleotide biosynthesis</keyword>
<keyword id="KW-0547">Nucleotide-binding</keyword>
<keyword id="KW-0808">Transferase</keyword>
<name>KAD_ECOBW</name>
<accession>C4ZUS8</accession>
<protein>
    <recommendedName>
        <fullName evidence="2">Adenylate kinase</fullName>
        <shortName evidence="2">AK</shortName>
        <ecNumber evidence="2">2.7.4.3</ecNumber>
    </recommendedName>
    <alternativeName>
        <fullName evidence="2">ATP-AMP transphosphorylase</fullName>
    </alternativeName>
    <alternativeName>
        <fullName evidence="2">ATP:AMP phosphotransferase</fullName>
    </alternativeName>
    <alternativeName>
        <fullName evidence="2">Adenylate monophosphate kinase</fullName>
    </alternativeName>
</protein>
<feature type="chain" id="PRO_1000204408" description="Adenylate kinase">
    <location>
        <begin position="1"/>
        <end position="214"/>
    </location>
</feature>
<feature type="region of interest" description="NMP" evidence="2">
    <location>
        <begin position="30"/>
        <end position="59"/>
    </location>
</feature>
<feature type="region of interest" description="LID">
    <location>
        <begin position="122"/>
        <end position="159"/>
    </location>
</feature>
<feature type="binding site" evidence="2">
    <location>
        <begin position="10"/>
        <end position="15"/>
    </location>
    <ligand>
        <name>ATP</name>
        <dbReference type="ChEBI" id="CHEBI:30616"/>
    </ligand>
</feature>
<feature type="binding site" evidence="2">
    <location>
        <position position="31"/>
    </location>
    <ligand>
        <name>AMP</name>
        <dbReference type="ChEBI" id="CHEBI:456215"/>
    </ligand>
</feature>
<feature type="binding site" evidence="2">
    <location>
        <position position="36"/>
    </location>
    <ligand>
        <name>AMP</name>
        <dbReference type="ChEBI" id="CHEBI:456215"/>
    </ligand>
</feature>
<feature type="binding site" evidence="2">
    <location>
        <begin position="57"/>
        <end position="59"/>
    </location>
    <ligand>
        <name>AMP</name>
        <dbReference type="ChEBI" id="CHEBI:456215"/>
    </ligand>
</feature>
<feature type="binding site" evidence="2">
    <location>
        <begin position="85"/>
        <end position="88"/>
    </location>
    <ligand>
        <name>AMP</name>
        <dbReference type="ChEBI" id="CHEBI:456215"/>
    </ligand>
</feature>
<feature type="binding site" evidence="2">
    <location>
        <position position="92"/>
    </location>
    <ligand>
        <name>AMP</name>
        <dbReference type="ChEBI" id="CHEBI:456215"/>
    </ligand>
</feature>
<feature type="binding site" evidence="2">
    <location>
        <position position="123"/>
    </location>
    <ligand>
        <name>ATP</name>
        <dbReference type="ChEBI" id="CHEBI:30616"/>
    </ligand>
</feature>
<feature type="binding site" evidence="2">
    <location>
        <begin position="132"/>
        <end position="133"/>
    </location>
    <ligand>
        <name>ATP</name>
        <dbReference type="ChEBI" id="CHEBI:30616"/>
    </ligand>
</feature>
<feature type="binding site" evidence="2">
    <location>
        <position position="156"/>
    </location>
    <ligand>
        <name>AMP</name>
        <dbReference type="ChEBI" id="CHEBI:456215"/>
    </ligand>
</feature>
<feature type="binding site" evidence="2">
    <location>
        <position position="167"/>
    </location>
    <ligand>
        <name>AMP</name>
        <dbReference type="ChEBI" id="CHEBI:456215"/>
    </ligand>
</feature>
<feature type="binding site" evidence="2">
    <location>
        <position position="200"/>
    </location>
    <ligand>
        <name>ATP</name>
        <dbReference type="ChEBI" id="CHEBI:30616"/>
    </ligand>
</feature>
<feature type="modified residue" description="N6-acetyllysine" evidence="1">
    <location>
        <position position="192"/>
    </location>
</feature>
<organism>
    <name type="scientific">Escherichia coli (strain K12 / MC4100 / BW2952)</name>
    <dbReference type="NCBI Taxonomy" id="595496"/>
    <lineage>
        <taxon>Bacteria</taxon>
        <taxon>Pseudomonadati</taxon>
        <taxon>Pseudomonadota</taxon>
        <taxon>Gammaproteobacteria</taxon>
        <taxon>Enterobacterales</taxon>
        <taxon>Enterobacteriaceae</taxon>
        <taxon>Escherichia</taxon>
    </lineage>
</organism>
<reference key="1">
    <citation type="journal article" date="2009" name="J. Bacteriol.">
        <title>Genomic sequencing reveals regulatory mutations and recombinational events in the widely used MC4100 lineage of Escherichia coli K-12.</title>
        <authorList>
            <person name="Ferenci T."/>
            <person name="Zhou Z."/>
            <person name="Betteridge T."/>
            <person name="Ren Y."/>
            <person name="Liu Y."/>
            <person name="Feng L."/>
            <person name="Reeves P.R."/>
            <person name="Wang L."/>
        </authorList>
    </citation>
    <scope>NUCLEOTIDE SEQUENCE [LARGE SCALE GENOMIC DNA]</scope>
    <source>
        <strain>K12 / MC4100 / BW2952</strain>
    </source>
</reference>
<evidence type="ECO:0000250" key="1"/>
<evidence type="ECO:0000255" key="2">
    <source>
        <dbReference type="HAMAP-Rule" id="MF_00235"/>
    </source>
</evidence>
<sequence>MRIILLGAPGAGKGTQAQFIMEKYGIPQISTGDMLRAAVKSGSELGKQAKDIMDAGKLVTDELVIALVKERIAQEDCRNGFLLDGFPRTIPQADAMKEAGINVDYVLEFDVPDELIVDRIVGRRVHAPSGRVYHVKFNPPKVEGKDDVTGEELTTRKDDQEETVRKRLVEYHQMTAPLIGYYSKEAEAGNTKYAKVDGTKPVAEVRADLEKILG</sequence>
<proteinExistence type="inferred from homology"/>
<comment type="function">
    <text evidence="2">Catalyzes the reversible transfer of the terminal phosphate group between ATP and AMP. Plays an important role in cellular energy homeostasis and in adenine nucleotide metabolism.</text>
</comment>
<comment type="catalytic activity">
    <reaction evidence="2">
        <text>AMP + ATP = 2 ADP</text>
        <dbReference type="Rhea" id="RHEA:12973"/>
        <dbReference type="ChEBI" id="CHEBI:30616"/>
        <dbReference type="ChEBI" id="CHEBI:456215"/>
        <dbReference type="ChEBI" id="CHEBI:456216"/>
        <dbReference type="EC" id="2.7.4.3"/>
    </reaction>
</comment>
<comment type="pathway">
    <text evidence="2">Purine metabolism; AMP biosynthesis via salvage pathway; AMP from ADP: step 1/1.</text>
</comment>
<comment type="subunit">
    <text evidence="2">Monomer.</text>
</comment>
<comment type="subcellular location">
    <subcellularLocation>
        <location evidence="2">Cytoplasm</location>
    </subcellularLocation>
</comment>
<comment type="domain">
    <text evidence="2">Consists of three domains, a large central CORE domain and two small peripheral domains, NMPbind and LID, which undergo movements during catalysis. The LID domain closes over the site of phosphoryl transfer upon ATP binding. Assembling and dissambling the active center during each catalytic cycle provides an effective means to prevent ATP hydrolysis.</text>
</comment>
<comment type="similarity">
    <text evidence="2">Belongs to the adenylate kinase family.</text>
</comment>
<gene>
    <name evidence="2" type="primary">adk</name>
    <name type="ordered locus">BWG_0355</name>
</gene>
<dbReference type="EC" id="2.7.4.3" evidence="2"/>
<dbReference type="EMBL" id="CP001396">
    <property type="protein sequence ID" value="ACR61932.1"/>
    <property type="molecule type" value="Genomic_DNA"/>
</dbReference>
<dbReference type="RefSeq" id="WP_001220233.1">
    <property type="nucleotide sequence ID" value="NC_012759.1"/>
</dbReference>
<dbReference type="SMR" id="C4ZUS8"/>
<dbReference type="GeneID" id="75170492"/>
<dbReference type="KEGG" id="ebw:BWG_0355"/>
<dbReference type="HOGENOM" id="CLU_032354_1_2_6"/>
<dbReference type="UniPathway" id="UPA00588">
    <property type="reaction ID" value="UER00649"/>
</dbReference>
<dbReference type="GO" id="GO:0005737">
    <property type="term" value="C:cytoplasm"/>
    <property type="evidence" value="ECO:0007669"/>
    <property type="project" value="UniProtKB-SubCell"/>
</dbReference>
<dbReference type="GO" id="GO:0004017">
    <property type="term" value="F:adenylate kinase activity"/>
    <property type="evidence" value="ECO:0007669"/>
    <property type="project" value="UniProtKB-UniRule"/>
</dbReference>
<dbReference type="GO" id="GO:0005524">
    <property type="term" value="F:ATP binding"/>
    <property type="evidence" value="ECO:0007669"/>
    <property type="project" value="UniProtKB-UniRule"/>
</dbReference>
<dbReference type="GO" id="GO:0044209">
    <property type="term" value="P:AMP salvage"/>
    <property type="evidence" value="ECO:0007669"/>
    <property type="project" value="UniProtKB-UniRule"/>
</dbReference>
<dbReference type="CDD" id="cd01428">
    <property type="entry name" value="ADK"/>
    <property type="match status" value="1"/>
</dbReference>
<dbReference type="FunFam" id="3.40.50.300:FF:000106">
    <property type="entry name" value="Adenylate kinase mitochondrial"/>
    <property type="match status" value="1"/>
</dbReference>
<dbReference type="Gene3D" id="3.40.50.300">
    <property type="entry name" value="P-loop containing nucleotide triphosphate hydrolases"/>
    <property type="match status" value="1"/>
</dbReference>
<dbReference type="HAMAP" id="MF_00235">
    <property type="entry name" value="Adenylate_kinase_Adk"/>
    <property type="match status" value="1"/>
</dbReference>
<dbReference type="InterPro" id="IPR006259">
    <property type="entry name" value="Adenyl_kin_sub"/>
</dbReference>
<dbReference type="InterPro" id="IPR000850">
    <property type="entry name" value="Adenylat/UMP-CMP_kin"/>
</dbReference>
<dbReference type="InterPro" id="IPR033690">
    <property type="entry name" value="Adenylat_kinase_CS"/>
</dbReference>
<dbReference type="InterPro" id="IPR007862">
    <property type="entry name" value="Adenylate_kinase_lid-dom"/>
</dbReference>
<dbReference type="InterPro" id="IPR027417">
    <property type="entry name" value="P-loop_NTPase"/>
</dbReference>
<dbReference type="NCBIfam" id="TIGR01351">
    <property type="entry name" value="adk"/>
    <property type="match status" value="1"/>
</dbReference>
<dbReference type="NCBIfam" id="NF001379">
    <property type="entry name" value="PRK00279.1-1"/>
    <property type="match status" value="1"/>
</dbReference>
<dbReference type="NCBIfam" id="NF001380">
    <property type="entry name" value="PRK00279.1-2"/>
    <property type="match status" value="1"/>
</dbReference>
<dbReference type="NCBIfam" id="NF001381">
    <property type="entry name" value="PRK00279.1-3"/>
    <property type="match status" value="1"/>
</dbReference>
<dbReference type="NCBIfam" id="NF011100">
    <property type="entry name" value="PRK14527.1"/>
    <property type="match status" value="1"/>
</dbReference>
<dbReference type="PANTHER" id="PTHR23359">
    <property type="entry name" value="NUCLEOTIDE KINASE"/>
    <property type="match status" value="1"/>
</dbReference>
<dbReference type="Pfam" id="PF00406">
    <property type="entry name" value="ADK"/>
    <property type="match status" value="1"/>
</dbReference>
<dbReference type="Pfam" id="PF05191">
    <property type="entry name" value="ADK_lid"/>
    <property type="match status" value="1"/>
</dbReference>
<dbReference type="PRINTS" id="PR00094">
    <property type="entry name" value="ADENYLTKNASE"/>
</dbReference>
<dbReference type="SUPFAM" id="SSF52540">
    <property type="entry name" value="P-loop containing nucleoside triphosphate hydrolases"/>
    <property type="match status" value="1"/>
</dbReference>
<dbReference type="PROSITE" id="PS00113">
    <property type="entry name" value="ADENYLATE_KINASE"/>
    <property type="match status" value="1"/>
</dbReference>